<dbReference type="EMBL" id="JN613325">
    <property type="protein sequence ID" value="AET85559.1"/>
    <property type="molecule type" value="mRNA"/>
</dbReference>
<dbReference type="PDB" id="4NTW">
    <property type="method" value="X-ray"/>
    <property type="resolution" value="2.07 A"/>
    <property type="chains" value="B=25-84"/>
</dbReference>
<dbReference type="PDB" id="4NTX">
    <property type="method" value="X-ray"/>
    <property type="resolution" value="2.27 A"/>
    <property type="chains" value="B=25-84"/>
</dbReference>
<dbReference type="PDB" id="4NTY">
    <property type="method" value="X-ray"/>
    <property type="resolution" value="2.65 A"/>
    <property type="chains" value="B=25-84"/>
</dbReference>
<dbReference type="PDBsum" id="4NTW"/>
<dbReference type="PDBsum" id="4NTX"/>
<dbReference type="PDBsum" id="4NTY"/>
<dbReference type="SMR" id="G9I929"/>
<dbReference type="EvolutionaryTrace" id="G9I929"/>
<dbReference type="GO" id="GO:0005576">
    <property type="term" value="C:extracellular region"/>
    <property type="evidence" value="ECO:0007669"/>
    <property type="project" value="UniProtKB-SubCell"/>
</dbReference>
<dbReference type="GO" id="GO:0099106">
    <property type="term" value="F:ion channel regulator activity"/>
    <property type="evidence" value="ECO:0007669"/>
    <property type="project" value="UniProtKB-KW"/>
</dbReference>
<dbReference type="GO" id="GO:0004867">
    <property type="term" value="F:serine-type endopeptidase inhibitor activity"/>
    <property type="evidence" value="ECO:0007669"/>
    <property type="project" value="UniProtKB-KW"/>
</dbReference>
<dbReference type="GO" id="GO:0090729">
    <property type="term" value="F:toxin activity"/>
    <property type="evidence" value="ECO:0007669"/>
    <property type="project" value="UniProtKB-KW"/>
</dbReference>
<dbReference type="CDD" id="cd22610">
    <property type="entry name" value="Kunitz_MitTx"/>
    <property type="match status" value="1"/>
</dbReference>
<dbReference type="Gene3D" id="4.10.410.10">
    <property type="entry name" value="Pancreatic trypsin inhibitor Kunitz domain"/>
    <property type="match status" value="1"/>
</dbReference>
<dbReference type="InterPro" id="IPR002223">
    <property type="entry name" value="Kunitz_BPTI"/>
</dbReference>
<dbReference type="InterPro" id="IPR036880">
    <property type="entry name" value="Kunitz_BPTI_sf"/>
</dbReference>
<dbReference type="Pfam" id="PF00014">
    <property type="entry name" value="Kunitz_BPTI"/>
    <property type="match status" value="1"/>
</dbReference>
<dbReference type="SMART" id="SM00131">
    <property type="entry name" value="KU"/>
    <property type="match status" value="1"/>
</dbReference>
<dbReference type="SUPFAM" id="SSF57362">
    <property type="entry name" value="BPTI-like"/>
    <property type="match status" value="1"/>
</dbReference>
<dbReference type="PROSITE" id="PS50279">
    <property type="entry name" value="BPTI_KUNITZ_2"/>
    <property type="match status" value="1"/>
</dbReference>
<name>VKTA_MICTN</name>
<feature type="signal peptide" evidence="2">
    <location>
        <begin position="1"/>
        <end position="24"/>
    </location>
</feature>
<feature type="chain" id="PRO_5000828217" description="Kunitz-type neurotoxin MitTx-alpha" evidence="6">
    <location>
        <begin position="25"/>
        <end position="84"/>
    </location>
</feature>
<feature type="domain" description="BPTI/Kunitz inhibitor" evidence="1">
    <location>
        <begin position="31"/>
        <end position="82"/>
    </location>
</feature>
<feature type="modified residue" description="Pyrrolidone carboxylic acid" evidence="2">
    <location>
        <position position="25"/>
    </location>
</feature>
<feature type="disulfide bond" evidence="3 7 8 9">
    <location>
        <begin position="31"/>
        <end position="82"/>
    </location>
</feature>
<feature type="disulfide bond" evidence="3 7 8 9">
    <location>
        <begin position="41"/>
        <end position="65"/>
    </location>
</feature>
<feature type="disulfide bond" evidence="3 7 8 9">
    <location>
        <begin position="57"/>
        <end position="78"/>
    </location>
</feature>
<feature type="helix" evidence="10">
    <location>
        <begin position="29"/>
        <end position="32"/>
    </location>
</feature>
<feature type="strand" evidence="10">
    <location>
        <begin position="45"/>
        <end position="51"/>
    </location>
</feature>
<feature type="turn" evidence="10">
    <location>
        <begin position="52"/>
        <end position="55"/>
    </location>
</feature>
<feature type="strand" evidence="10">
    <location>
        <begin position="56"/>
        <end position="62"/>
    </location>
</feature>
<feature type="strand" evidence="10">
    <location>
        <begin position="67"/>
        <end position="69"/>
    </location>
</feature>
<feature type="strand" evidence="10">
    <location>
        <begin position="72"/>
        <end position="74"/>
    </location>
</feature>
<feature type="helix" evidence="10">
    <location>
        <begin position="75"/>
        <end position="83"/>
    </location>
</feature>
<reference key="1">
    <citation type="journal article" date="2011" name="Nature">
        <title>A heteromeric Texas coral snake toxin targets acid-sensing ion channels to produce pain.</title>
        <authorList>
            <person name="Bohlen C.J."/>
            <person name="Chesler A.T."/>
            <person name="Sharif-Naeini R."/>
            <person name="Medzihradszky K.F."/>
            <person name="Zhou S."/>
            <person name="King D."/>
            <person name="Sanchez E.E."/>
            <person name="Burlingame A.L."/>
            <person name="Basbaum A.I."/>
            <person name="Julius D."/>
        </authorList>
    </citation>
    <scope>NUCLEOTIDE SEQUENCE [MRNA]</scope>
    <scope>PROTEIN SEQUENCE OF 25-50 AND 59-67</scope>
    <scope>FUNCTION</scope>
    <scope>SUBUNIT</scope>
    <scope>PYROGLUTAMATE FORMATION AT GLN-25</scope>
    <source>
        <tissue>Venom</tissue>
        <tissue>Venom gland</tissue>
    </source>
</reference>
<reference key="2">
    <citation type="journal article" date="2014" name="Cell">
        <title>X-ray structure of acid-sensing ion channel 1-snake toxin complex reveals open state of a Na(+)-selective channel.</title>
        <authorList>
            <person name="Baconguis I."/>
            <person name="Bohlen C.J."/>
            <person name="Goehring A."/>
            <person name="Julius D."/>
            <person name="Gouaux E."/>
        </authorList>
    </citation>
    <scope>X-RAY CRYSTALLOGRAPHY (2.07 ANGSTROMS) OF 25-84 IN COMPLEX WITH MITTX-BETA AND THE CHICKEN ASIC1 IN AN OPEN STATE</scope>
    <scope>DISULFIDE BONDS</scope>
    <scope>FUNCTION</scope>
</reference>
<evidence type="ECO:0000255" key="1">
    <source>
        <dbReference type="PROSITE-ProRule" id="PRU00031"/>
    </source>
</evidence>
<evidence type="ECO:0000269" key="2">
    <source>
    </source>
</evidence>
<evidence type="ECO:0000269" key="3">
    <source>
    </source>
</evidence>
<evidence type="ECO:0000303" key="4">
    <source>
    </source>
</evidence>
<evidence type="ECO:0000305" key="5"/>
<evidence type="ECO:0000305" key="6">
    <source>
    </source>
</evidence>
<evidence type="ECO:0000312" key="7">
    <source>
        <dbReference type="PDB" id="4NTW"/>
    </source>
</evidence>
<evidence type="ECO:0000312" key="8">
    <source>
        <dbReference type="PDB" id="4NTX"/>
    </source>
</evidence>
<evidence type="ECO:0000312" key="9">
    <source>
        <dbReference type="PDB" id="4NTY"/>
    </source>
</evidence>
<evidence type="ECO:0007829" key="10">
    <source>
        <dbReference type="PDB" id="4NTW"/>
    </source>
</evidence>
<organism>
    <name type="scientific">Micrurus tener tener</name>
    <name type="common">Texas coral snake</name>
    <dbReference type="NCBI Taxonomy" id="1114302"/>
    <lineage>
        <taxon>Eukaryota</taxon>
        <taxon>Metazoa</taxon>
        <taxon>Chordata</taxon>
        <taxon>Craniata</taxon>
        <taxon>Vertebrata</taxon>
        <taxon>Euteleostomi</taxon>
        <taxon>Lepidosauria</taxon>
        <taxon>Squamata</taxon>
        <taxon>Bifurcata</taxon>
        <taxon>Unidentata</taxon>
        <taxon>Episquamata</taxon>
        <taxon>Toxicofera</taxon>
        <taxon>Serpentes</taxon>
        <taxon>Colubroidea</taxon>
        <taxon>Elapidae</taxon>
        <taxon>Elapinae</taxon>
        <taxon>Micrurus</taxon>
    </lineage>
</organism>
<sequence length="84" mass="9498">MSSGGLLLLLGLLTLCAELTPVSSQIRPAFCYEDPPFFQKCGAFVDSYYFNRSRITCVHFFYGQCDVNQNHFTTMSECNRVCHG</sequence>
<accession>G9I929</accession>
<keyword id="KW-0002">3D-structure</keyword>
<keyword id="KW-0903">Direct protein sequencing</keyword>
<keyword id="KW-1015">Disulfide bond</keyword>
<keyword id="KW-0872">Ion channel impairing toxin</keyword>
<keyword id="KW-0646">Protease inhibitor</keyword>
<keyword id="KW-1275">Proton-gated sodium channel impairing toxin</keyword>
<keyword id="KW-0873">Pyrrolidone carboxylic acid</keyword>
<keyword id="KW-0964">Secreted</keyword>
<keyword id="KW-0722">Serine protease inhibitor</keyword>
<keyword id="KW-0732">Signal</keyword>
<keyword id="KW-0800">Toxin</keyword>
<comment type="function">
    <text evidence="2 3">MitTx, a heteromeric complex between Kunitz- and phospholipase-A2-like proteins, potently, persistently and selectively activates rat and chicken acid-sensing ion channel ASIC1 (PubMed:22094702, PubMed:24507937). Both alternatively spliced rat isoforms ASIC1a and ASIC1b are activated, with a higher potency for ASIC1a (EC(50)=9.4 nM) vs ASIC1b (EC(50)=23 nM) (PubMed:22094702). The rat ASIC3 subtype is also sensitive to the heterodimer, but with a lower potency (EC(50)=830 nM) (PubMed:22094702). On rat ASIC2a, the toxin shows a very weak activation, but produces a remarkable potentiation (&gt;100-fold) of protons when the extracellular pH drops below neutrality (PubMed:22094702). Moderate and weak activations are also observed on the heterotrimers Asic1a-Asic2a and Asic1a-Asic3 (expressed in CHO cells), respectively (PubMed:22094702). The binding sites of the beta subunit of MitTx and the spider psalmotoxin-1 overlap, explaining why these toxins are mutually exclusive (PubMed:22094702, PubMed:24507937). In vivo, the heterodimer elicits robust pain-related behavior in mice by activation of ASIC1 channels on capsaicin-sensitive nerve fibers (PubMed:22094702).</text>
</comment>
<comment type="subunit">
    <text evidence="2">Heterodimer of an alpha (Kunitz-type) and a beta (phospholipase A2 homolog) chains; non-covalently-linked.</text>
</comment>
<comment type="subcellular location">
    <subcellularLocation>
        <location evidence="2">Secreted</location>
    </subcellularLocation>
</comment>
<comment type="tissue specificity">
    <text evidence="6">Expressed by the venom gland.</text>
</comment>
<comment type="domain">
    <text evidence="3">The toxin-channel complex has a triskelion-like shape with one toxin heterodimer radiating from each ASIC1 subunit. Toxin subunits protrude from the edges of the channel trimer, with each heterodimer interacting almost exclusively with a single subunit.</text>
</comment>
<comment type="miscellaneous">
    <text evidence="6">Negative results: the heterodimeric toxin does not affect ASIC2b, ASIC4, Asic2a-Asic3 heterotrimer, Kv2.1/KCNB1, Cav3.3/CACNA1I, ENaC alpha/beta/gamma (SCNN1A/SCNN1B/SCNN1G), TRPA1, TRPV1, TRPV3, TRPM8, P2X2/P2RX2, and 5-HT3/HTR3A channels.</text>
</comment>
<comment type="similarity">
    <text evidence="5">Belongs to the venom Kunitz-type family.</text>
</comment>
<comment type="online information" name="Protein Spotlight">
    <link uri="https://www.proteinspotlight.org/back_issues/140"/>
    <text>The poison in pain - Issue 140 of July 2012</text>
</comment>
<proteinExistence type="evidence at protein level"/>
<protein>
    <recommendedName>
        <fullName evidence="4">Kunitz-type neurotoxin MitTx-alpha</fullName>
    </recommendedName>
</protein>